<comment type="function">
    <text evidence="1">Participates actively in the response to hyperosmotic and heat shock by preventing the aggregation of stress-denatured proteins, in association with DnaK and GrpE. It is the nucleotide exchange factor for DnaK and may function as a thermosensor. Unfolded proteins bind initially to DnaJ; upon interaction with the DnaJ-bound protein, DnaK hydrolyzes its bound ATP, resulting in the formation of a stable complex. GrpE releases ADP from DnaK; ATP binding to DnaK triggers the release of the substrate protein, thus completing the reaction cycle. Several rounds of ATP-dependent interactions between DnaJ, DnaK and GrpE are required for fully efficient folding.</text>
</comment>
<comment type="subunit">
    <text evidence="1">Homodimer.</text>
</comment>
<comment type="subcellular location">
    <subcellularLocation>
        <location evidence="1">Cytoplasm</location>
    </subcellularLocation>
</comment>
<comment type="similarity">
    <text evidence="1">Belongs to the GrpE family.</text>
</comment>
<feature type="chain" id="PRO_0000113898" description="Protein GrpE">
    <location>
        <begin position="1"/>
        <end position="189"/>
    </location>
</feature>
<feature type="region of interest" description="Disordered" evidence="2">
    <location>
        <begin position="1"/>
        <end position="37"/>
    </location>
</feature>
<feature type="compositionally biased region" description="Basic and acidic residues" evidence="2">
    <location>
        <begin position="17"/>
        <end position="33"/>
    </location>
</feature>
<protein>
    <recommendedName>
        <fullName evidence="1">Protein GrpE</fullName>
    </recommendedName>
    <alternativeName>
        <fullName evidence="1">HSP-70 cofactor</fullName>
    </alternativeName>
</protein>
<name>GRPE_WOLPM</name>
<sequence length="189" mass="21488">MSDSSKEKKKKFADMVSRQKGDDQQSDNHKQTDDLNEDLNTLKERAVQLEDHLRRAVADNENVKRIMQKQISDASDYAVTKLARDMIDSCDNLKRVMEILKDGDPVHEGIKVAYQKIINDLKKHGIKEVDPLGELFDSNLHQAVVEREDNEKEPGTIVEVLQTGYTIKNRLLRPAMVILSKKSADCGND</sequence>
<proteinExistence type="inferred from homology"/>
<reference key="1">
    <citation type="journal article" date="2004" name="PLoS Biol.">
        <title>Phylogenomics of the reproductive parasite Wolbachia pipientis wMel: a streamlined genome overrun by mobile genetic elements.</title>
        <authorList>
            <person name="Wu M."/>
            <person name="Sun L.V."/>
            <person name="Vamathevan J.J."/>
            <person name="Riegler M."/>
            <person name="DeBoy R.T."/>
            <person name="Brownlie J.C."/>
            <person name="McGraw E.A."/>
            <person name="Martin W."/>
            <person name="Esser C."/>
            <person name="Ahmadinejad N."/>
            <person name="Wiegand C."/>
            <person name="Madupu R."/>
            <person name="Beanan M.J."/>
            <person name="Brinkac L.M."/>
            <person name="Daugherty S.C."/>
            <person name="Durkin A.S."/>
            <person name="Kolonay J.F."/>
            <person name="Nelson W.C."/>
            <person name="Mohamoud Y."/>
            <person name="Lee P."/>
            <person name="Berry K.J."/>
            <person name="Young M.B."/>
            <person name="Utterback T.R."/>
            <person name="Weidman J.F."/>
            <person name="Nierman W.C."/>
            <person name="Paulsen I.T."/>
            <person name="Nelson K.E."/>
            <person name="Tettelin H."/>
            <person name="O'Neill S.L."/>
            <person name="Eisen J.A."/>
        </authorList>
    </citation>
    <scope>NUCLEOTIDE SEQUENCE [LARGE SCALE GENOMIC DNA]</scope>
</reference>
<keyword id="KW-0143">Chaperone</keyword>
<keyword id="KW-0963">Cytoplasm</keyword>
<keyword id="KW-0346">Stress response</keyword>
<accession>Q73GX9</accession>
<gene>
    <name evidence="1" type="primary">grpE</name>
    <name type="ordered locus">WD_0800</name>
</gene>
<dbReference type="EMBL" id="AE017196">
    <property type="protein sequence ID" value="AAS14487.1"/>
    <property type="molecule type" value="Genomic_DNA"/>
</dbReference>
<dbReference type="RefSeq" id="WP_010962841.1">
    <property type="nucleotide sequence ID" value="NZ_OX384529.1"/>
</dbReference>
<dbReference type="SMR" id="Q73GX9"/>
<dbReference type="EnsemblBacteria" id="AAS14487">
    <property type="protein sequence ID" value="AAS14487"/>
    <property type="gene ID" value="WD_0800"/>
</dbReference>
<dbReference type="KEGG" id="wol:WD_0800"/>
<dbReference type="eggNOG" id="COG0576">
    <property type="taxonomic scope" value="Bacteria"/>
</dbReference>
<dbReference type="Proteomes" id="UP000008215">
    <property type="component" value="Chromosome"/>
</dbReference>
<dbReference type="GO" id="GO:0005737">
    <property type="term" value="C:cytoplasm"/>
    <property type="evidence" value="ECO:0007669"/>
    <property type="project" value="UniProtKB-SubCell"/>
</dbReference>
<dbReference type="GO" id="GO:0000774">
    <property type="term" value="F:adenyl-nucleotide exchange factor activity"/>
    <property type="evidence" value="ECO:0007669"/>
    <property type="project" value="InterPro"/>
</dbReference>
<dbReference type="GO" id="GO:0042803">
    <property type="term" value="F:protein homodimerization activity"/>
    <property type="evidence" value="ECO:0007669"/>
    <property type="project" value="InterPro"/>
</dbReference>
<dbReference type="GO" id="GO:0051087">
    <property type="term" value="F:protein-folding chaperone binding"/>
    <property type="evidence" value="ECO:0007669"/>
    <property type="project" value="InterPro"/>
</dbReference>
<dbReference type="GO" id="GO:0051082">
    <property type="term" value="F:unfolded protein binding"/>
    <property type="evidence" value="ECO:0007669"/>
    <property type="project" value="TreeGrafter"/>
</dbReference>
<dbReference type="GO" id="GO:0006457">
    <property type="term" value="P:protein folding"/>
    <property type="evidence" value="ECO:0007669"/>
    <property type="project" value="InterPro"/>
</dbReference>
<dbReference type="CDD" id="cd00446">
    <property type="entry name" value="GrpE"/>
    <property type="match status" value="1"/>
</dbReference>
<dbReference type="FunFam" id="2.30.22.10:FF:000001">
    <property type="entry name" value="Protein GrpE"/>
    <property type="match status" value="1"/>
</dbReference>
<dbReference type="Gene3D" id="3.90.20.20">
    <property type="match status" value="1"/>
</dbReference>
<dbReference type="Gene3D" id="2.30.22.10">
    <property type="entry name" value="Head domain of nucleotide exchange factor GrpE"/>
    <property type="match status" value="1"/>
</dbReference>
<dbReference type="HAMAP" id="MF_01151">
    <property type="entry name" value="GrpE"/>
    <property type="match status" value="1"/>
</dbReference>
<dbReference type="InterPro" id="IPR000740">
    <property type="entry name" value="GrpE"/>
</dbReference>
<dbReference type="InterPro" id="IPR013805">
    <property type="entry name" value="GrpE_coiled_coil"/>
</dbReference>
<dbReference type="InterPro" id="IPR009012">
    <property type="entry name" value="GrpE_head"/>
</dbReference>
<dbReference type="PANTHER" id="PTHR21237">
    <property type="entry name" value="GRPE PROTEIN"/>
    <property type="match status" value="1"/>
</dbReference>
<dbReference type="PANTHER" id="PTHR21237:SF23">
    <property type="entry name" value="GRPE PROTEIN HOMOLOG, MITOCHONDRIAL"/>
    <property type="match status" value="1"/>
</dbReference>
<dbReference type="Pfam" id="PF01025">
    <property type="entry name" value="GrpE"/>
    <property type="match status" value="1"/>
</dbReference>
<dbReference type="PRINTS" id="PR00773">
    <property type="entry name" value="GRPEPROTEIN"/>
</dbReference>
<dbReference type="SUPFAM" id="SSF58014">
    <property type="entry name" value="Coiled-coil domain of nucleotide exchange factor GrpE"/>
    <property type="match status" value="1"/>
</dbReference>
<dbReference type="SUPFAM" id="SSF51064">
    <property type="entry name" value="Head domain of nucleotide exchange factor GrpE"/>
    <property type="match status" value="1"/>
</dbReference>
<dbReference type="PROSITE" id="PS01071">
    <property type="entry name" value="GRPE"/>
    <property type="match status" value="1"/>
</dbReference>
<evidence type="ECO:0000255" key="1">
    <source>
        <dbReference type="HAMAP-Rule" id="MF_01151"/>
    </source>
</evidence>
<evidence type="ECO:0000256" key="2">
    <source>
        <dbReference type="SAM" id="MobiDB-lite"/>
    </source>
</evidence>
<organism>
    <name type="scientific">Wolbachia pipientis wMel</name>
    <dbReference type="NCBI Taxonomy" id="163164"/>
    <lineage>
        <taxon>Bacteria</taxon>
        <taxon>Pseudomonadati</taxon>
        <taxon>Pseudomonadota</taxon>
        <taxon>Alphaproteobacteria</taxon>
        <taxon>Rickettsiales</taxon>
        <taxon>Anaplasmataceae</taxon>
        <taxon>Wolbachieae</taxon>
        <taxon>Wolbachia</taxon>
    </lineage>
</organism>